<dbReference type="EMBL" id="CP000034">
    <property type="protein sequence ID" value="ABB63919.1"/>
    <property type="molecule type" value="Genomic_DNA"/>
</dbReference>
<dbReference type="RefSeq" id="WP_000102298.1">
    <property type="nucleotide sequence ID" value="NC_007606.1"/>
</dbReference>
<dbReference type="RefSeq" id="YP_405410.1">
    <property type="nucleotide sequence ID" value="NC_007606.1"/>
</dbReference>
<dbReference type="STRING" id="300267.SDY_4001"/>
<dbReference type="EnsemblBacteria" id="ABB63919">
    <property type="protein sequence ID" value="ABB63919"/>
    <property type="gene ID" value="SDY_4001"/>
</dbReference>
<dbReference type="KEGG" id="sdy:SDY_4001"/>
<dbReference type="PATRIC" id="fig|300267.13.peg.4713"/>
<dbReference type="HOGENOM" id="CLU_008142_4_2_6"/>
<dbReference type="Proteomes" id="UP000002716">
    <property type="component" value="Chromosome"/>
</dbReference>
<dbReference type="GO" id="GO:0005886">
    <property type="term" value="C:plasma membrane"/>
    <property type="evidence" value="ECO:0007669"/>
    <property type="project" value="UniProtKB-SubCell"/>
</dbReference>
<dbReference type="GO" id="GO:0015079">
    <property type="term" value="F:potassium ion transmembrane transporter activity"/>
    <property type="evidence" value="ECO:0007669"/>
    <property type="project" value="UniProtKB-UniRule"/>
</dbReference>
<dbReference type="GO" id="GO:0015293">
    <property type="term" value="F:symporter activity"/>
    <property type="evidence" value="ECO:0007669"/>
    <property type="project" value="UniProtKB-UniRule"/>
</dbReference>
<dbReference type="HAMAP" id="MF_01522">
    <property type="entry name" value="Kup"/>
    <property type="match status" value="1"/>
</dbReference>
<dbReference type="InterPro" id="IPR003855">
    <property type="entry name" value="K+_transporter"/>
</dbReference>
<dbReference type="InterPro" id="IPR053952">
    <property type="entry name" value="K_trans_C"/>
</dbReference>
<dbReference type="InterPro" id="IPR053951">
    <property type="entry name" value="K_trans_N"/>
</dbReference>
<dbReference type="InterPro" id="IPR023051">
    <property type="entry name" value="Kup"/>
</dbReference>
<dbReference type="NCBIfam" id="TIGR00794">
    <property type="entry name" value="kup"/>
    <property type="match status" value="1"/>
</dbReference>
<dbReference type="NCBIfam" id="NF008015">
    <property type="entry name" value="PRK10745.1"/>
    <property type="match status" value="1"/>
</dbReference>
<dbReference type="PANTHER" id="PTHR30540:SF79">
    <property type="entry name" value="LOW AFFINITY POTASSIUM TRANSPORT SYSTEM PROTEIN KUP"/>
    <property type="match status" value="1"/>
</dbReference>
<dbReference type="PANTHER" id="PTHR30540">
    <property type="entry name" value="OSMOTIC STRESS POTASSIUM TRANSPORTER"/>
    <property type="match status" value="1"/>
</dbReference>
<dbReference type="Pfam" id="PF02705">
    <property type="entry name" value="K_trans"/>
    <property type="match status" value="1"/>
</dbReference>
<dbReference type="Pfam" id="PF22776">
    <property type="entry name" value="K_trans_C"/>
    <property type="match status" value="1"/>
</dbReference>
<accession>Q329T6</accession>
<proteinExistence type="inferred from homology"/>
<feature type="chain" id="PRO_0000279829" description="Low affinity potassium transport system protein Kup">
    <location>
        <begin position="1"/>
        <end position="624"/>
    </location>
</feature>
<feature type="transmembrane region" description="Helical" evidence="1">
    <location>
        <begin position="9"/>
        <end position="29"/>
    </location>
</feature>
<feature type="transmembrane region" description="Helical" evidence="1">
    <location>
        <begin position="49"/>
        <end position="69"/>
    </location>
</feature>
<feature type="transmembrane region" description="Helical" evidence="1">
    <location>
        <begin position="103"/>
        <end position="123"/>
    </location>
</feature>
<feature type="transmembrane region" description="Helical" evidence="1">
    <location>
        <begin position="137"/>
        <end position="157"/>
    </location>
</feature>
<feature type="transmembrane region" description="Helical" evidence="1">
    <location>
        <begin position="165"/>
        <end position="185"/>
    </location>
</feature>
<feature type="transmembrane region" description="Helical" evidence="1">
    <location>
        <begin position="213"/>
        <end position="233"/>
    </location>
</feature>
<feature type="transmembrane region" description="Helical" evidence="1">
    <location>
        <begin position="247"/>
        <end position="267"/>
    </location>
</feature>
<feature type="transmembrane region" description="Helical" evidence="1">
    <location>
        <begin position="276"/>
        <end position="296"/>
    </location>
</feature>
<feature type="transmembrane region" description="Helical" evidence="1">
    <location>
        <begin position="337"/>
        <end position="357"/>
    </location>
</feature>
<feature type="transmembrane region" description="Helical" evidence="1">
    <location>
        <begin position="365"/>
        <end position="385"/>
    </location>
</feature>
<feature type="transmembrane region" description="Helical" evidence="1">
    <location>
        <begin position="398"/>
        <end position="418"/>
    </location>
</feature>
<feature type="transmembrane region" description="Helical" evidence="1">
    <location>
        <begin position="421"/>
        <end position="441"/>
    </location>
</feature>
<sequence length="624" mass="69573">MSTDNKQSLPAITLAAIGVVYGDIGTSPLYTLRECLSGQFGFGVERDAVFGFLSLIFWLLIFVVSIKYLTFVIRADNAGEGGILTLMSLAGRNTSARTTSMLVIMGLIGGSFFYGEVVITPAISVMSAIEGLEIVAPQLDTWIVPLSIIVLTLLFMIQKHGTAMVGKLFAPIMLTWFLILAGLGLRSIIANPEVLHALNPMWAVHFFLEYKTVSFIALGAVVLSITGVEALYADMGHFGKFPIRLAWFTVVLPSLTLNYFGQGALLLKNPEAIKNPFFLLAPDWALIPLLIIAALATVIASQAVISGVFLLTRQAVRLGYLSPMRIIHTSEMESGQIYIPFVNWMLYVAVVIVIVIVSFEHSSNLAAAYGIAVTGTMVLTSILSTTVARQNWHWNKYFVALILIAFLCVDIPLFTANLDKLLSGGWLPLSLGTVMFIVMTTWKSERFRLLRRMHEHGNSLEAMIASLEKSPPVRVPGTEVYMSRAINVIPFALMHNLKHNKVLHERVILLTLRTEDAPYVHNVRRVQIEQLSPTFWRVVASYGWRETPNVEEVFHRCGLEGLSCRMMETSFFMSHESLILGKRPWYLRLRGKLYLLLQRNALRAPDQFEIPPNRVIELGTQVEI</sequence>
<evidence type="ECO:0000255" key="1">
    <source>
        <dbReference type="HAMAP-Rule" id="MF_01522"/>
    </source>
</evidence>
<name>KUP_SHIDS</name>
<keyword id="KW-0997">Cell inner membrane</keyword>
<keyword id="KW-1003">Cell membrane</keyword>
<keyword id="KW-0406">Ion transport</keyword>
<keyword id="KW-0472">Membrane</keyword>
<keyword id="KW-0630">Potassium</keyword>
<keyword id="KW-0633">Potassium transport</keyword>
<keyword id="KW-1185">Reference proteome</keyword>
<keyword id="KW-0769">Symport</keyword>
<keyword id="KW-0812">Transmembrane</keyword>
<keyword id="KW-1133">Transmembrane helix</keyword>
<keyword id="KW-0813">Transport</keyword>
<reference key="1">
    <citation type="journal article" date="2005" name="Nucleic Acids Res.">
        <title>Genome dynamics and diversity of Shigella species, the etiologic agents of bacillary dysentery.</title>
        <authorList>
            <person name="Yang F."/>
            <person name="Yang J."/>
            <person name="Zhang X."/>
            <person name="Chen L."/>
            <person name="Jiang Y."/>
            <person name="Yan Y."/>
            <person name="Tang X."/>
            <person name="Wang J."/>
            <person name="Xiong Z."/>
            <person name="Dong J."/>
            <person name="Xue Y."/>
            <person name="Zhu Y."/>
            <person name="Xu X."/>
            <person name="Sun L."/>
            <person name="Chen S."/>
            <person name="Nie H."/>
            <person name="Peng J."/>
            <person name="Xu J."/>
            <person name="Wang Y."/>
            <person name="Yuan Z."/>
            <person name="Wen Y."/>
            <person name="Yao Z."/>
            <person name="Shen Y."/>
            <person name="Qiang B."/>
            <person name="Hou Y."/>
            <person name="Yu J."/>
            <person name="Jin Q."/>
        </authorList>
    </citation>
    <scope>NUCLEOTIDE SEQUENCE [LARGE SCALE GENOMIC DNA]</scope>
    <source>
        <strain>Sd197</strain>
    </source>
</reference>
<organism>
    <name type="scientific">Shigella dysenteriae serotype 1 (strain Sd197)</name>
    <dbReference type="NCBI Taxonomy" id="300267"/>
    <lineage>
        <taxon>Bacteria</taxon>
        <taxon>Pseudomonadati</taxon>
        <taxon>Pseudomonadota</taxon>
        <taxon>Gammaproteobacteria</taxon>
        <taxon>Enterobacterales</taxon>
        <taxon>Enterobacteriaceae</taxon>
        <taxon>Shigella</taxon>
    </lineage>
</organism>
<gene>
    <name evidence="1" type="primary">kup</name>
    <name type="ordered locus">SDY_4001</name>
</gene>
<protein>
    <recommendedName>
        <fullName evidence="1">Low affinity potassium transport system protein Kup</fullName>
    </recommendedName>
    <alternativeName>
        <fullName evidence="1">Kup system potassium uptake protein</fullName>
    </alternativeName>
</protein>
<comment type="function">
    <text evidence="1">Responsible for the low-affinity transport of potassium into the cell. Likely operates as a K(+):H(+) symporter.</text>
</comment>
<comment type="catalytic activity">
    <reaction evidence="1">
        <text>K(+)(in) + H(+)(in) = K(+)(out) + H(+)(out)</text>
        <dbReference type="Rhea" id="RHEA:28490"/>
        <dbReference type="ChEBI" id="CHEBI:15378"/>
        <dbReference type="ChEBI" id="CHEBI:29103"/>
    </reaction>
    <physiologicalReaction direction="right-to-left" evidence="1">
        <dbReference type="Rhea" id="RHEA:28492"/>
    </physiologicalReaction>
</comment>
<comment type="subcellular location">
    <subcellularLocation>
        <location evidence="1">Cell inner membrane</location>
        <topology evidence="1">Multi-pass membrane protein</topology>
    </subcellularLocation>
</comment>
<comment type="similarity">
    <text evidence="1">Belongs to the HAK/KUP transporter (TC 2.A.72) family.</text>
</comment>